<reference key="1">
    <citation type="journal article" date="2007" name="Nat. Biotechnol.">
        <title>Genome sequence of the lignocellulose-bioconverting and xylose-fermenting yeast Pichia stipitis.</title>
        <authorList>
            <person name="Jeffries T.W."/>
            <person name="Grigoriev I.V."/>
            <person name="Grimwood J."/>
            <person name="Laplaza J.M."/>
            <person name="Aerts A."/>
            <person name="Salamov A."/>
            <person name="Schmutz J."/>
            <person name="Lindquist E."/>
            <person name="Dehal P."/>
            <person name="Shapiro H."/>
            <person name="Jin Y.-S."/>
            <person name="Passoth V."/>
            <person name="Richardson P.M."/>
        </authorList>
    </citation>
    <scope>NUCLEOTIDE SEQUENCE [LARGE SCALE GENOMIC DNA]</scope>
    <source>
        <strain>ATCC 58785 / CBS 6054 / NBRC 10063 / NRRL Y-11545</strain>
    </source>
</reference>
<dbReference type="EMBL" id="AAVQ01000002">
    <property type="protein sequence ID" value="EAZ62796.1"/>
    <property type="molecule type" value="Genomic_DNA"/>
</dbReference>
<dbReference type="RefSeq" id="XP_001386819.1">
    <property type="nucleotide sequence ID" value="XM_001386782.1"/>
</dbReference>
<dbReference type="SMR" id="A3GHD3"/>
<dbReference type="FunCoup" id="A3GHD3">
    <property type="interactions" value="592"/>
</dbReference>
<dbReference type="STRING" id="322104.A3GHD3"/>
<dbReference type="GeneID" id="4851682"/>
<dbReference type="KEGG" id="pic:PICST_69583"/>
<dbReference type="eggNOG" id="KOG2239">
    <property type="taxonomic scope" value="Eukaryota"/>
</dbReference>
<dbReference type="HOGENOM" id="CLU_057806_2_1_1"/>
<dbReference type="InParanoid" id="A3GHD3"/>
<dbReference type="OMA" id="SQKMIFA"/>
<dbReference type="OrthoDB" id="3169036at2759"/>
<dbReference type="Proteomes" id="UP000002258">
    <property type="component" value="Chromosome 1"/>
</dbReference>
<dbReference type="GO" id="GO:0005854">
    <property type="term" value="C:nascent polypeptide-associated complex"/>
    <property type="evidence" value="ECO:0007669"/>
    <property type="project" value="EnsemblFungi"/>
</dbReference>
<dbReference type="GO" id="GO:0005634">
    <property type="term" value="C:nucleus"/>
    <property type="evidence" value="ECO:0007669"/>
    <property type="project" value="UniProtKB-SubCell"/>
</dbReference>
<dbReference type="GO" id="GO:0070300">
    <property type="term" value="F:phosphatidic acid binding"/>
    <property type="evidence" value="ECO:0007669"/>
    <property type="project" value="EnsemblFungi"/>
</dbReference>
<dbReference type="GO" id="GO:0080025">
    <property type="term" value="F:phosphatidylinositol-3,5-bisphosphate binding"/>
    <property type="evidence" value="ECO:0007669"/>
    <property type="project" value="EnsemblFungi"/>
</dbReference>
<dbReference type="GO" id="GO:0032266">
    <property type="term" value="F:phosphatidylinositol-3-phosphate binding"/>
    <property type="evidence" value="ECO:0007669"/>
    <property type="project" value="EnsemblFungi"/>
</dbReference>
<dbReference type="GO" id="GO:0070273">
    <property type="term" value="F:phosphatidylinositol-4-phosphate binding"/>
    <property type="evidence" value="ECO:0007669"/>
    <property type="project" value="EnsemblFungi"/>
</dbReference>
<dbReference type="GO" id="GO:0051082">
    <property type="term" value="F:unfolded protein binding"/>
    <property type="evidence" value="ECO:0007669"/>
    <property type="project" value="EnsemblFungi"/>
</dbReference>
<dbReference type="GO" id="GO:0006613">
    <property type="term" value="P:cotranslational protein targeting to membrane"/>
    <property type="evidence" value="ECO:0007669"/>
    <property type="project" value="EnsemblFungi"/>
</dbReference>
<dbReference type="GO" id="GO:0015031">
    <property type="term" value="P:protein transport"/>
    <property type="evidence" value="ECO:0007669"/>
    <property type="project" value="UniProtKB-KW"/>
</dbReference>
<dbReference type="CDD" id="cd22054">
    <property type="entry name" value="NAC_NACA"/>
    <property type="match status" value="1"/>
</dbReference>
<dbReference type="CDD" id="cd14358">
    <property type="entry name" value="UBA_NAC_euk"/>
    <property type="match status" value="1"/>
</dbReference>
<dbReference type="FunFam" id="2.20.70.30:FF:000002">
    <property type="entry name" value="Nascent polypeptide-associated complex (NAC), alpha subunit"/>
    <property type="match status" value="1"/>
</dbReference>
<dbReference type="Gene3D" id="1.10.8.10">
    <property type="entry name" value="DNA helicase RuvA subunit, C-terminal domain"/>
    <property type="match status" value="1"/>
</dbReference>
<dbReference type="Gene3D" id="2.20.70.30">
    <property type="entry name" value="Nascent polypeptide-associated complex domain"/>
    <property type="match status" value="1"/>
</dbReference>
<dbReference type="InterPro" id="IPR016641">
    <property type="entry name" value="EGD2/NACA0like"/>
</dbReference>
<dbReference type="InterPro" id="IPR044034">
    <property type="entry name" value="NAC-like_UBA"/>
</dbReference>
<dbReference type="InterPro" id="IPR038187">
    <property type="entry name" value="NAC_A/B_dom_sf"/>
</dbReference>
<dbReference type="InterPro" id="IPR002715">
    <property type="entry name" value="Nas_poly-pep-assoc_cplx_dom"/>
</dbReference>
<dbReference type="InterPro" id="IPR009060">
    <property type="entry name" value="UBA-like_sf"/>
</dbReference>
<dbReference type="PANTHER" id="PTHR21713">
    <property type="entry name" value="NASCENT POLYPEPTIDE ASSOCIATED COMPLEX ALPHA SUBUNIT-RELATED"/>
    <property type="match status" value="1"/>
</dbReference>
<dbReference type="Pfam" id="PF01849">
    <property type="entry name" value="NAC"/>
    <property type="match status" value="1"/>
</dbReference>
<dbReference type="Pfam" id="PF19026">
    <property type="entry name" value="UBA_HYPK"/>
    <property type="match status" value="1"/>
</dbReference>
<dbReference type="PIRSF" id="PIRSF015901">
    <property type="entry name" value="NAC_alpha"/>
    <property type="match status" value="1"/>
</dbReference>
<dbReference type="SMART" id="SM01407">
    <property type="entry name" value="NAC"/>
    <property type="match status" value="1"/>
</dbReference>
<dbReference type="SUPFAM" id="SSF46934">
    <property type="entry name" value="UBA-like"/>
    <property type="match status" value="1"/>
</dbReference>
<dbReference type="PROSITE" id="PS51151">
    <property type="entry name" value="NAC_AB"/>
    <property type="match status" value="1"/>
</dbReference>
<organism>
    <name type="scientific">Scheffersomyces stipitis (strain ATCC 58785 / CBS 6054 / NBRC 10063 / NRRL Y-11545)</name>
    <name type="common">Yeast</name>
    <name type="synonym">Pichia stipitis</name>
    <dbReference type="NCBI Taxonomy" id="322104"/>
    <lineage>
        <taxon>Eukaryota</taxon>
        <taxon>Fungi</taxon>
        <taxon>Dikarya</taxon>
        <taxon>Ascomycota</taxon>
        <taxon>Saccharomycotina</taxon>
        <taxon>Pichiomycetes</taxon>
        <taxon>Debaryomycetaceae</taxon>
        <taxon>Scheffersomyces</taxon>
    </lineage>
</organism>
<name>NACA_PICST</name>
<comment type="function">
    <text evidence="1">Component of the nascent polypeptide-associated complex (NAC), a dynamic component of the ribosomal exit tunnel, protecting the emerging polypeptides from interaction with other cytoplasmic proteins to ensure appropriate nascent protein targeting. The NAC complex also promotes mitochondrial protein import by enhancing productive ribosome interactions with the outer mitochondrial membrane and blocks the inappropriate interaction of ribosomes translating non-secretory nascent polypeptides with translocation sites in the membrane of the endoplasmic reticulum. EGD2 may also be involved in transcription regulation (By similarity).</text>
</comment>
<comment type="subunit">
    <text evidence="1">Part of the nascent polypeptide-associated complex (NAC), consisting of EGD2 and EGD1. NAC associates with ribosomes via EGD1 (By similarity).</text>
</comment>
<comment type="subcellular location">
    <subcellularLocation>
        <location evidence="1">Cytoplasm</location>
    </subcellularLocation>
    <subcellularLocation>
        <location evidence="1">Nucleus</location>
    </subcellularLocation>
    <text evidence="1">Predominantly cytoplasmic, may also transiently localize to the nucleus.</text>
</comment>
<comment type="similarity">
    <text evidence="4">Belongs to the NAC-alpha family.</text>
</comment>
<feature type="chain" id="PRO_0000285133" description="Nascent polypeptide-associated complex subunit alpha">
    <location>
        <begin position="1"/>
        <end position="176"/>
    </location>
</feature>
<feature type="domain" description="NAC-A/B" evidence="2">
    <location>
        <begin position="16"/>
        <end position="80"/>
    </location>
</feature>
<feature type="domain" description="UBA">
    <location>
        <begin position="138"/>
        <end position="175"/>
    </location>
</feature>
<feature type="region of interest" description="Disordered" evidence="3">
    <location>
        <begin position="83"/>
        <end position="110"/>
    </location>
</feature>
<feature type="compositionally biased region" description="Basic and acidic residues" evidence="3">
    <location>
        <begin position="91"/>
        <end position="110"/>
    </location>
</feature>
<evidence type="ECO:0000250" key="1"/>
<evidence type="ECO:0000255" key="2">
    <source>
        <dbReference type="PROSITE-ProRule" id="PRU00507"/>
    </source>
</evidence>
<evidence type="ECO:0000256" key="3">
    <source>
        <dbReference type="SAM" id="MobiDB-lite"/>
    </source>
</evidence>
<evidence type="ECO:0000305" key="4"/>
<protein>
    <recommendedName>
        <fullName>Nascent polypeptide-associated complex subunit alpha</fullName>
        <shortName>NAC-alpha</shortName>
    </recommendedName>
    <alternativeName>
        <fullName>Alpha-NAC</fullName>
    </alternativeName>
</protein>
<proteinExistence type="inferred from homology"/>
<keyword id="KW-0963">Cytoplasm</keyword>
<keyword id="KW-0539">Nucleus</keyword>
<keyword id="KW-0653">Protein transport</keyword>
<keyword id="KW-1185">Reference proteome</keyword>
<keyword id="KW-0813">Transport</keyword>
<accession>A3GHD3</accession>
<gene>
    <name type="primary">EGD2</name>
    <name type="ORF">PICST_69583</name>
</gene>
<sequence>MSIEEIPQGADVNVIPKNEKKARELIKKLNLKQIKGITRVTFKQRGNLIYAIDAPDVYRSAAGTYVVFGEAKVDDMNQRIADAQAAQAAETDAHAGHTHSHGEEDKSPEAITADLEKASLTEKIEEEEEEGEVDESGLDAKDIDIIVEQTQVSRAKAVKALRKHDGDMVNAIMELS</sequence>